<sequence>MKTTMAAAATCLVALLVVVLAEAAGVGCTTVAYNDRSLVIDGERRIIISGSIHYPRSTPEMWPDLIKKAKEGGLDAIETYVFWNGHEPHRRQYNFEGNYDIIRFFKEIQNAGLYAILRIGPYICGEWNYGGLPAWLRDIPQMQFRMHNAPFENEMENFTTLIINKMKDANMFAGQGGPIILAQIENEYGNVMGQLNNNQSASEYIHWCADMANKQNVGVPWIMCQQDSDVPHNVVNTCNGFYCHDWFPNRTGIPKIWTENWTGWFKAWDKPDFHRSAEDIAFAVAMFFQKRGSLQNYYMYHGGTNFGRTSGGPYITTSYDYDAPLDEYGNLRQPKYGHLKDLHSVIKSIEKILVHGEYVDANYSDNVTVTKYTLGSTSACFINNRNDNKDLNVTLDGNTHLLPAWSVSILPDCKTVAFNSAKIKAQTTIMVKKANMVEKEPESLKWSWMRENLTPFMTDEKGSYRKNELLEQIVTSTDQSDYLWYRTSLDHKGEASYTLFVNTTGHELYAFVNGMLVGKNHSPNGHFVFQLESAVKLHDGKNYISLLSATIGLKNYGPLFEKMPAGIVGGPVKLIDNNGTGIDLSNSSWSYKAGLAGEYRQIHLDKPGYRWDNNNGTVPINRPFTWYKTTFQAPAGQDTVVVDLLGLNKGVAWVNGNNLGRYWPSYTAAEMGGCHHCDYRGVFQAEGDGQKCLTGCGEPSQRYYHVPRSFLKNGEPNTLILFEEAGGDPSQVIFHSVVAGSVCVSAEVGDAITLSCGQHSKTISTIDVTSFGVARGQCGAYEGGCESKAAYKAFTEACLGKESCTVQIINALTGSGCLSGVLTVQASC</sequence>
<proteinExistence type="evidence at transcript level"/>
<reference key="1">
    <citation type="journal article" date="2003" name="Science">
        <title>In-depth view of structure, activity, and evolution of rice chromosome 10.</title>
        <authorList>
            <person name="Yu Y."/>
            <person name="Rambo T."/>
            <person name="Currie J."/>
            <person name="Saski C."/>
            <person name="Kim H.-R."/>
            <person name="Collura K."/>
            <person name="Thompson S."/>
            <person name="Simmons J."/>
            <person name="Yang T.-J."/>
            <person name="Nah G."/>
            <person name="Patel A.J."/>
            <person name="Thurmond S."/>
            <person name="Henry D."/>
            <person name="Oates R."/>
            <person name="Palmer M."/>
            <person name="Pries G."/>
            <person name="Gibson J."/>
            <person name="Anderson H."/>
            <person name="Paradkar M."/>
            <person name="Crane L."/>
            <person name="Dale J."/>
            <person name="Carver M.B."/>
            <person name="Wood T."/>
            <person name="Frisch D."/>
            <person name="Engler F."/>
            <person name="Soderlund C."/>
            <person name="Palmer L.E."/>
            <person name="Teytelman L."/>
            <person name="Nascimento L."/>
            <person name="De la Bastide M."/>
            <person name="Spiegel L."/>
            <person name="Ware D."/>
            <person name="O'Shaughnessy A."/>
            <person name="Dike S."/>
            <person name="Dedhia N."/>
            <person name="Preston R."/>
            <person name="Huang E."/>
            <person name="Ferraro K."/>
            <person name="Kuit K."/>
            <person name="Miller B."/>
            <person name="Zutavern T."/>
            <person name="Katzenberger F."/>
            <person name="Muller S."/>
            <person name="Balija V."/>
            <person name="Martienssen R.A."/>
            <person name="Stein L."/>
            <person name="Minx P."/>
            <person name="Johnson D."/>
            <person name="Cordum H."/>
            <person name="Mardis E."/>
            <person name="Cheng Z."/>
            <person name="Jiang J."/>
            <person name="Wilson R."/>
            <person name="McCombie W.R."/>
            <person name="Wing R.A."/>
            <person name="Yuan Q."/>
            <person name="Ouyang S."/>
            <person name="Liu J."/>
            <person name="Jones K.M."/>
            <person name="Gansberger K."/>
            <person name="Moffat K."/>
            <person name="Hill J."/>
            <person name="Tsitrin T."/>
            <person name="Overton L."/>
            <person name="Bera J."/>
            <person name="Kim M."/>
            <person name="Jin S."/>
            <person name="Tallon L."/>
            <person name="Ciecko A."/>
            <person name="Pai G."/>
            <person name="Van Aken S."/>
            <person name="Utterback T."/>
            <person name="Reidmuller S."/>
            <person name="Bormann J."/>
            <person name="Feldblyum T."/>
            <person name="Hsiao J."/>
            <person name="Zismann V."/>
            <person name="Blunt S."/>
            <person name="de Vazeille A.R."/>
            <person name="Shaffer T."/>
            <person name="Koo H."/>
            <person name="Suh B."/>
            <person name="Yang Q."/>
            <person name="Haas B."/>
            <person name="Peterson J."/>
            <person name="Pertea M."/>
            <person name="Volfovsky N."/>
            <person name="Wortman J."/>
            <person name="White O."/>
            <person name="Salzberg S.L."/>
            <person name="Fraser C.M."/>
            <person name="Buell C.R."/>
            <person name="Messing J."/>
            <person name="Song R."/>
            <person name="Fuks G."/>
            <person name="Llaca V."/>
            <person name="Kovchak S."/>
            <person name="Young S."/>
            <person name="Bowers J.E."/>
            <person name="Paterson A.H."/>
            <person name="Johns M.A."/>
            <person name="Mao L."/>
            <person name="Pan H."/>
            <person name="Dean R.A."/>
        </authorList>
    </citation>
    <scope>NUCLEOTIDE SEQUENCE [LARGE SCALE GENOMIC DNA]</scope>
    <source>
        <strain>cv. Nipponbare</strain>
    </source>
</reference>
<reference key="2">
    <citation type="journal article" date="2005" name="Nature">
        <title>The map-based sequence of the rice genome.</title>
        <authorList>
            <consortium name="International rice genome sequencing project (IRGSP)"/>
        </authorList>
    </citation>
    <scope>NUCLEOTIDE SEQUENCE [LARGE SCALE GENOMIC DNA]</scope>
    <source>
        <strain>cv. Nipponbare</strain>
    </source>
</reference>
<reference key="3">
    <citation type="journal article" date="2008" name="Nucleic Acids Res.">
        <title>The rice annotation project database (RAP-DB): 2008 update.</title>
        <authorList>
            <consortium name="The rice annotation project (RAP)"/>
        </authorList>
    </citation>
    <scope>GENOME REANNOTATION</scope>
    <source>
        <strain>cv. Nipponbare</strain>
    </source>
</reference>
<reference key="4">
    <citation type="journal article" date="2013" name="Rice">
        <title>Improvement of the Oryza sativa Nipponbare reference genome using next generation sequence and optical map data.</title>
        <authorList>
            <person name="Kawahara Y."/>
            <person name="de la Bastide M."/>
            <person name="Hamilton J.P."/>
            <person name="Kanamori H."/>
            <person name="McCombie W.R."/>
            <person name="Ouyang S."/>
            <person name="Schwartz D.C."/>
            <person name="Tanaka T."/>
            <person name="Wu J."/>
            <person name="Zhou S."/>
            <person name="Childs K.L."/>
            <person name="Davidson R.M."/>
            <person name="Lin H."/>
            <person name="Quesada-Ocampo L."/>
            <person name="Vaillancourt B."/>
            <person name="Sakai H."/>
            <person name="Lee S.S."/>
            <person name="Kim J."/>
            <person name="Numa H."/>
            <person name="Itoh T."/>
            <person name="Buell C.R."/>
            <person name="Matsumoto T."/>
        </authorList>
    </citation>
    <scope>GENOME REANNOTATION</scope>
    <source>
        <strain>cv. Nipponbare</strain>
    </source>
</reference>
<reference key="5">
    <citation type="journal article" date="2005" name="PLoS Biol.">
        <title>The genomes of Oryza sativa: a history of duplications.</title>
        <authorList>
            <person name="Yu J."/>
            <person name="Wang J."/>
            <person name="Lin W."/>
            <person name="Li S."/>
            <person name="Li H."/>
            <person name="Zhou J."/>
            <person name="Ni P."/>
            <person name="Dong W."/>
            <person name="Hu S."/>
            <person name="Zeng C."/>
            <person name="Zhang J."/>
            <person name="Zhang Y."/>
            <person name="Li R."/>
            <person name="Xu Z."/>
            <person name="Li S."/>
            <person name="Li X."/>
            <person name="Zheng H."/>
            <person name="Cong L."/>
            <person name="Lin L."/>
            <person name="Yin J."/>
            <person name="Geng J."/>
            <person name="Li G."/>
            <person name="Shi J."/>
            <person name="Liu J."/>
            <person name="Lv H."/>
            <person name="Li J."/>
            <person name="Wang J."/>
            <person name="Deng Y."/>
            <person name="Ran L."/>
            <person name="Shi X."/>
            <person name="Wang X."/>
            <person name="Wu Q."/>
            <person name="Li C."/>
            <person name="Ren X."/>
            <person name="Wang J."/>
            <person name="Wang X."/>
            <person name="Li D."/>
            <person name="Liu D."/>
            <person name="Zhang X."/>
            <person name="Ji Z."/>
            <person name="Zhao W."/>
            <person name="Sun Y."/>
            <person name="Zhang Z."/>
            <person name="Bao J."/>
            <person name="Han Y."/>
            <person name="Dong L."/>
            <person name="Ji J."/>
            <person name="Chen P."/>
            <person name="Wu S."/>
            <person name="Liu J."/>
            <person name="Xiao Y."/>
            <person name="Bu D."/>
            <person name="Tan J."/>
            <person name="Yang L."/>
            <person name="Ye C."/>
            <person name="Zhang J."/>
            <person name="Xu J."/>
            <person name="Zhou Y."/>
            <person name="Yu Y."/>
            <person name="Zhang B."/>
            <person name="Zhuang S."/>
            <person name="Wei H."/>
            <person name="Liu B."/>
            <person name="Lei M."/>
            <person name="Yu H."/>
            <person name="Li Y."/>
            <person name="Xu H."/>
            <person name="Wei S."/>
            <person name="He X."/>
            <person name="Fang L."/>
            <person name="Zhang Z."/>
            <person name="Zhang Y."/>
            <person name="Huang X."/>
            <person name="Su Z."/>
            <person name="Tong W."/>
            <person name="Li J."/>
            <person name="Tong Z."/>
            <person name="Li S."/>
            <person name="Ye J."/>
            <person name="Wang L."/>
            <person name="Fang L."/>
            <person name="Lei T."/>
            <person name="Chen C.-S."/>
            <person name="Chen H.-C."/>
            <person name="Xu Z."/>
            <person name="Li H."/>
            <person name="Huang H."/>
            <person name="Zhang F."/>
            <person name="Xu H."/>
            <person name="Li N."/>
            <person name="Zhao C."/>
            <person name="Li S."/>
            <person name="Dong L."/>
            <person name="Huang Y."/>
            <person name="Li L."/>
            <person name="Xi Y."/>
            <person name="Qi Q."/>
            <person name="Li W."/>
            <person name="Zhang B."/>
            <person name="Hu W."/>
            <person name="Zhang Y."/>
            <person name="Tian X."/>
            <person name="Jiao Y."/>
            <person name="Liang X."/>
            <person name="Jin J."/>
            <person name="Gao L."/>
            <person name="Zheng W."/>
            <person name="Hao B."/>
            <person name="Liu S.-M."/>
            <person name="Wang W."/>
            <person name="Yuan L."/>
            <person name="Cao M."/>
            <person name="McDermott J."/>
            <person name="Samudrala R."/>
            <person name="Wang J."/>
            <person name="Wong G.K.-S."/>
            <person name="Yang H."/>
        </authorList>
    </citation>
    <scope>NUCLEOTIDE SEQUENCE [LARGE SCALE GENOMIC DNA]</scope>
    <source>
        <strain>cv. Nipponbare</strain>
    </source>
</reference>
<reference key="6">
    <citation type="journal article" date="2003" name="Science">
        <title>Collection, mapping, and annotation of over 28,000 cDNA clones from japonica rice.</title>
        <authorList>
            <consortium name="The rice full-length cDNA consortium"/>
        </authorList>
    </citation>
    <scope>NUCLEOTIDE SEQUENCE [LARGE SCALE MRNA]</scope>
    <source>
        <strain>cv. Nipponbare</strain>
    </source>
</reference>
<comment type="catalytic activity">
    <reaction>
        <text>Hydrolysis of terminal non-reducing beta-D-galactose residues in beta-D-galactosides.</text>
        <dbReference type="EC" id="3.2.1.23"/>
    </reaction>
</comment>
<comment type="subcellular location">
    <subcellularLocation>
        <location evidence="3">Secreted</location>
        <location evidence="3">Extracellular space</location>
        <location evidence="3">Apoplast</location>
    </subcellularLocation>
</comment>
<comment type="similarity">
    <text evidence="3">Belongs to the glycosyl hydrolase 35 family.</text>
</comment>
<comment type="sequence caution" evidence="3">
    <conflict type="erroneous initiation">
        <sequence resource="EMBL-CDS" id="AAL31090"/>
    </conflict>
</comment>
<comment type="sequence caution" evidence="3">
    <conflict type="erroneous initiation">
        <sequence resource="EMBL-CDS" id="AAN04162"/>
    </conflict>
</comment>
<comment type="sequence caution" evidence="3">
    <conflict type="erroneous initiation">
        <sequence resource="EMBL-CDS" id="EAZ15685"/>
    </conflict>
</comment>
<protein>
    <recommendedName>
        <fullName>Beta-galactosidase 13</fullName>
        <shortName>Lactase 13</shortName>
        <ecNumber>3.2.1.23</ecNumber>
    </recommendedName>
</protein>
<accession>Q7G3T8</accession>
<accession>A0A0P0XTB2</accession>
<accession>A3C3M2</accession>
<accession>Q7G642</accession>
<accession>Q8W5D6</accession>
<feature type="signal peptide" evidence="1">
    <location>
        <begin position="1"/>
        <end position="23"/>
    </location>
</feature>
<feature type="chain" id="PRO_0000294165" description="Beta-galactosidase 13">
    <location>
        <begin position="24"/>
        <end position="828"/>
    </location>
</feature>
<feature type="domain" description="SUEL-type lectin" evidence="2">
    <location>
        <begin position="746"/>
        <end position="828"/>
    </location>
</feature>
<feature type="active site" description="Proton donor" evidence="1">
    <location>
        <position position="187"/>
    </location>
</feature>
<feature type="active site" description="Nucleophile" evidence="1">
    <location>
        <position position="259"/>
    </location>
</feature>
<feature type="glycosylation site" description="N-linked (GlcNAc...) asparagine" evidence="1">
    <location>
        <position position="157"/>
    </location>
</feature>
<feature type="glycosylation site" description="N-linked (GlcNAc...) asparagine" evidence="1">
    <location>
        <position position="198"/>
    </location>
</feature>
<feature type="glycosylation site" description="N-linked (GlcNAc...) asparagine" evidence="1">
    <location>
        <position position="249"/>
    </location>
</feature>
<feature type="glycosylation site" description="N-linked (GlcNAc...) asparagine" evidence="1">
    <location>
        <position position="260"/>
    </location>
</feature>
<feature type="glycosylation site" description="N-linked (GlcNAc...) asparagine" evidence="1">
    <location>
        <position position="362"/>
    </location>
</feature>
<feature type="glycosylation site" description="N-linked (GlcNAc...) asparagine" evidence="1">
    <location>
        <position position="366"/>
    </location>
</feature>
<feature type="glycosylation site" description="N-linked (GlcNAc...) asparagine" evidence="1">
    <location>
        <position position="392"/>
    </location>
</feature>
<feature type="glycosylation site" description="N-linked (GlcNAc...) asparagine" evidence="1">
    <location>
        <position position="502"/>
    </location>
</feature>
<feature type="glycosylation site" description="N-linked (GlcNAc...) asparagine" evidence="1">
    <location>
        <position position="578"/>
    </location>
</feature>
<feature type="glycosylation site" description="N-linked (GlcNAc...) asparagine" evidence="1">
    <location>
        <position position="586"/>
    </location>
</feature>
<feature type="glycosylation site" description="N-linked (GlcNAc...) asparagine" evidence="1">
    <location>
        <position position="615"/>
    </location>
</feature>
<feature type="sequence conflict" description="In Ref. 6; AK119350." evidence="3" ref="6">
    <original>S</original>
    <variation>N</variation>
    <location>
        <position position="420"/>
    </location>
</feature>
<feature type="sequence conflict" description="In Ref. 6; AK119350." evidence="3" ref="6">
    <original>H</original>
    <variation>R</variation>
    <location>
        <position position="521"/>
    </location>
</feature>
<feature type="sequence conflict" description="In Ref. 5; EAZ15685." evidence="3" ref="5">
    <original>C</original>
    <variation>G</variation>
    <location>
        <position position="817"/>
    </location>
</feature>
<gene>
    <name type="ordered locus">Os10g0330600</name>
    <name type="ordered locus">LOC_Os10g18400</name>
    <name type="ORF">OsJ_029894</name>
    <name type="ORF">OSJNAb0008A05.15</name>
    <name type="ORF">OSJNBb0008A05.25</name>
</gene>
<evidence type="ECO:0000255" key="1"/>
<evidence type="ECO:0000255" key="2">
    <source>
        <dbReference type="PROSITE-ProRule" id="PRU00260"/>
    </source>
</evidence>
<evidence type="ECO:0000305" key="3"/>
<dbReference type="EC" id="3.2.1.23"/>
<dbReference type="EMBL" id="AC091749">
    <property type="protein sequence ID" value="AAL31090.1"/>
    <property type="status" value="ALT_INIT"/>
    <property type="molecule type" value="Genomic_DNA"/>
</dbReference>
<dbReference type="EMBL" id="AC131374">
    <property type="protein sequence ID" value="AAN04162.1"/>
    <property type="status" value="ALT_INIT"/>
    <property type="molecule type" value="Genomic_DNA"/>
</dbReference>
<dbReference type="EMBL" id="DP000086">
    <property type="protein sequence ID" value="AAP53027.2"/>
    <property type="molecule type" value="Genomic_DNA"/>
</dbReference>
<dbReference type="EMBL" id="AP008216">
    <property type="protein sequence ID" value="BAF26280.1"/>
    <property type="molecule type" value="Genomic_DNA"/>
</dbReference>
<dbReference type="EMBL" id="AP014966">
    <property type="protein sequence ID" value="BAT10359.1"/>
    <property type="molecule type" value="Genomic_DNA"/>
</dbReference>
<dbReference type="EMBL" id="CM000147">
    <property type="protein sequence ID" value="EAZ15685.1"/>
    <property type="status" value="ALT_INIT"/>
    <property type="molecule type" value="Genomic_DNA"/>
</dbReference>
<dbReference type="EMBL" id="AK119350">
    <property type="status" value="NOT_ANNOTATED_CDS"/>
    <property type="molecule type" value="mRNA"/>
</dbReference>
<dbReference type="RefSeq" id="XP_015613802.1">
    <property type="nucleotide sequence ID" value="XM_015758316.1"/>
</dbReference>
<dbReference type="SMR" id="Q7G3T8"/>
<dbReference type="FunCoup" id="Q7G3T8">
    <property type="interactions" value="2"/>
</dbReference>
<dbReference type="STRING" id="39947.Q7G3T8"/>
<dbReference type="CAZy" id="GH35">
    <property type="family name" value="Glycoside Hydrolase Family 35"/>
</dbReference>
<dbReference type="PaxDb" id="39947-Q7G3T8"/>
<dbReference type="EnsemblPlants" id="Os10t0330600-01">
    <property type="protein sequence ID" value="Os10t0330600-01"/>
    <property type="gene ID" value="Os10g0330600"/>
</dbReference>
<dbReference type="Gramene" id="Os10t0330600-01">
    <property type="protein sequence ID" value="Os10t0330600-01"/>
    <property type="gene ID" value="Os10g0330600"/>
</dbReference>
<dbReference type="KEGG" id="dosa:Os10g0330600"/>
<dbReference type="eggNOG" id="KOG0496">
    <property type="taxonomic scope" value="Eukaryota"/>
</dbReference>
<dbReference type="HOGENOM" id="CLU_007853_4_0_1"/>
<dbReference type="InParanoid" id="Q7G3T8"/>
<dbReference type="OMA" id="VMGQLNN"/>
<dbReference type="OrthoDB" id="724889at2759"/>
<dbReference type="Proteomes" id="UP000000763">
    <property type="component" value="Chromosome 10"/>
</dbReference>
<dbReference type="Proteomes" id="UP000007752">
    <property type="component" value="Chromosome 10"/>
</dbReference>
<dbReference type="Proteomes" id="UP000059680">
    <property type="component" value="Chromosome 10"/>
</dbReference>
<dbReference type="GO" id="GO:0048046">
    <property type="term" value="C:apoplast"/>
    <property type="evidence" value="ECO:0007669"/>
    <property type="project" value="UniProtKB-SubCell"/>
</dbReference>
<dbReference type="GO" id="GO:0009505">
    <property type="term" value="C:plant-type cell wall"/>
    <property type="evidence" value="ECO:0000318"/>
    <property type="project" value="GO_Central"/>
</dbReference>
<dbReference type="GO" id="GO:0005773">
    <property type="term" value="C:vacuole"/>
    <property type="evidence" value="ECO:0000318"/>
    <property type="project" value="GO_Central"/>
</dbReference>
<dbReference type="GO" id="GO:0004565">
    <property type="term" value="F:beta-galactosidase activity"/>
    <property type="evidence" value="ECO:0000318"/>
    <property type="project" value="GO_Central"/>
</dbReference>
<dbReference type="GO" id="GO:0030246">
    <property type="term" value="F:carbohydrate binding"/>
    <property type="evidence" value="ECO:0007669"/>
    <property type="project" value="InterPro"/>
</dbReference>
<dbReference type="GO" id="GO:0019388">
    <property type="term" value="P:galactose catabolic process"/>
    <property type="evidence" value="ECO:0000318"/>
    <property type="project" value="GO_Central"/>
</dbReference>
<dbReference type="GO" id="GO:0009827">
    <property type="term" value="P:plant-type cell wall modification"/>
    <property type="evidence" value="ECO:0000318"/>
    <property type="project" value="GO_Central"/>
</dbReference>
<dbReference type="CDD" id="cd22842">
    <property type="entry name" value="Gal_Rha_Lectin_BGal"/>
    <property type="match status" value="1"/>
</dbReference>
<dbReference type="FunFam" id="2.60.120.260:FF:000109">
    <property type="entry name" value="Beta-galactosidase"/>
    <property type="match status" value="1"/>
</dbReference>
<dbReference type="FunFam" id="2.60.120.260:FF:000142">
    <property type="entry name" value="Beta-galactosidase"/>
    <property type="match status" value="1"/>
</dbReference>
<dbReference type="FunFam" id="3.20.20.80:FF:000006">
    <property type="entry name" value="Beta-galactosidase"/>
    <property type="match status" value="1"/>
</dbReference>
<dbReference type="Gene3D" id="2.60.120.260">
    <property type="entry name" value="Galactose-binding domain-like"/>
    <property type="match status" value="2"/>
</dbReference>
<dbReference type="Gene3D" id="3.20.20.80">
    <property type="entry name" value="Glycosidases"/>
    <property type="match status" value="1"/>
</dbReference>
<dbReference type="InterPro" id="IPR048913">
    <property type="entry name" value="BetaGal_gal-bd"/>
</dbReference>
<dbReference type="InterPro" id="IPR008979">
    <property type="entry name" value="Galactose-bd-like_sf"/>
</dbReference>
<dbReference type="InterPro" id="IPR041392">
    <property type="entry name" value="GHD"/>
</dbReference>
<dbReference type="InterPro" id="IPR031330">
    <property type="entry name" value="Gly_Hdrlase_35_cat"/>
</dbReference>
<dbReference type="InterPro" id="IPR019801">
    <property type="entry name" value="Glyco_hydro_35_CS"/>
</dbReference>
<dbReference type="InterPro" id="IPR001944">
    <property type="entry name" value="Glycoside_Hdrlase_35"/>
</dbReference>
<dbReference type="InterPro" id="IPR017853">
    <property type="entry name" value="Glycoside_hydrolase_SF"/>
</dbReference>
<dbReference type="InterPro" id="IPR000922">
    <property type="entry name" value="Lectin_gal-bd_dom"/>
</dbReference>
<dbReference type="PANTHER" id="PTHR23421">
    <property type="entry name" value="BETA-GALACTOSIDASE RELATED"/>
    <property type="match status" value="1"/>
</dbReference>
<dbReference type="Pfam" id="PF21467">
    <property type="entry name" value="BetaGal_gal-bd"/>
    <property type="match status" value="1"/>
</dbReference>
<dbReference type="Pfam" id="PF17834">
    <property type="entry name" value="GHD"/>
    <property type="match status" value="1"/>
</dbReference>
<dbReference type="Pfam" id="PF01301">
    <property type="entry name" value="Glyco_hydro_35"/>
    <property type="match status" value="1"/>
</dbReference>
<dbReference type="Pfam" id="PF02140">
    <property type="entry name" value="SUEL_Lectin"/>
    <property type="match status" value="1"/>
</dbReference>
<dbReference type="PRINTS" id="PR00742">
    <property type="entry name" value="GLHYDRLASE35"/>
</dbReference>
<dbReference type="SUPFAM" id="SSF51445">
    <property type="entry name" value="(Trans)glycosidases"/>
    <property type="match status" value="1"/>
</dbReference>
<dbReference type="SUPFAM" id="SSF49785">
    <property type="entry name" value="Galactose-binding domain-like"/>
    <property type="match status" value="2"/>
</dbReference>
<dbReference type="PROSITE" id="PS01182">
    <property type="entry name" value="GLYCOSYL_HYDROL_F35"/>
    <property type="match status" value="1"/>
</dbReference>
<dbReference type="PROSITE" id="PS50228">
    <property type="entry name" value="SUEL_LECTIN"/>
    <property type="match status" value="1"/>
</dbReference>
<name>BGA13_ORYSJ</name>
<organism>
    <name type="scientific">Oryza sativa subsp. japonica</name>
    <name type="common">Rice</name>
    <dbReference type="NCBI Taxonomy" id="39947"/>
    <lineage>
        <taxon>Eukaryota</taxon>
        <taxon>Viridiplantae</taxon>
        <taxon>Streptophyta</taxon>
        <taxon>Embryophyta</taxon>
        <taxon>Tracheophyta</taxon>
        <taxon>Spermatophyta</taxon>
        <taxon>Magnoliopsida</taxon>
        <taxon>Liliopsida</taxon>
        <taxon>Poales</taxon>
        <taxon>Poaceae</taxon>
        <taxon>BOP clade</taxon>
        <taxon>Oryzoideae</taxon>
        <taxon>Oryzeae</taxon>
        <taxon>Oryzinae</taxon>
        <taxon>Oryza</taxon>
        <taxon>Oryza sativa</taxon>
    </lineage>
</organism>
<keyword id="KW-0052">Apoplast</keyword>
<keyword id="KW-0325">Glycoprotein</keyword>
<keyword id="KW-0326">Glycosidase</keyword>
<keyword id="KW-0378">Hydrolase</keyword>
<keyword id="KW-1185">Reference proteome</keyword>
<keyword id="KW-0964">Secreted</keyword>
<keyword id="KW-0732">Signal</keyword>